<feature type="chain" id="PRO_0000212194" description="2,3-bisphosphoglycerate-independent phosphoglycerate mutase">
    <location>
        <begin position="1"/>
        <end position="552"/>
    </location>
</feature>
<feature type="region of interest" description="Disordered" evidence="2">
    <location>
        <begin position="1"/>
        <end position="30"/>
    </location>
</feature>
<feature type="compositionally biased region" description="Polar residues" evidence="2">
    <location>
        <begin position="1"/>
        <end position="25"/>
    </location>
</feature>
<feature type="active site" description="Phosphoserine intermediate" evidence="1">
    <location>
        <position position="88"/>
    </location>
</feature>
<feature type="binding site" evidence="1">
    <location>
        <position position="38"/>
    </location>
    <ligand>
        <name>Mn(2+)</name>
        <dbReference type="ChEBI" id="CHEBI:29035"/>
        <label>2</label>
    </ligand>
</feature>
<feature type="binding site" evidence="1">
    <location>
        <position position="88"/>
    </location>
    <ligand>
        <name>Mn(2+)</name>
        <dbReference type="ChEBI" id="CHEBI:29035"/>
        <label>2</label>
    </ligand>
</feature>
<feature type="binding site" evidence="1">
    <location>
        <position position="149"/>
    </location>
    <ligand>
        <name>substrate</name>
    </ligand>
</feature>
<feature type="binding site" evidence="1">
    <location>
        <begin position="179"/>
        <end position="180"/>
    </location>
    <ligand>
        <name>substrate</name>
    </ligand>
</feature>
<feature type="binding site" evidence="1">
    <location>
        <position position="217"/>
    </location>
    <ligand>
        <name>substrate</name>
    </ligand>
</feature>
<feature type="binding site" evidence="1">
    <location>
        <position position="223"/>
    </location>
    <ligand>
        <name>substrate</name>
    </ligand>
</feature>
<feature type="binding site" evidence="1">
    <location>
        <begin position="293"/>
        <end position="296"/>
    </location>
    <ligand>
        <name>substrate</name>
    </ligand>
</feature>
<feature type="binding site" evidence="1">
    <location>
        <position position="373"/>
    </location>
    <ligand>
        <name>substrate</name>
    </ligand>
</feature>
<feature type="binding site" evidence="1">
    <location>
        <position position="440"/>
    </location>
    <ligand>
        <name>Mn(2+)</name>
        <dbReference type="ChEBI" id="CHEBI:29035"/>
        <label>1</label>
    </ligand>
</feature>
<feature type="binding site" evidence="1">
    <location>
        <position position="444"/>
    </location>
    <ligand>
        <name>Mn(2+)</name>
        <dbReference type="ChEBI" id="CHEBI:29035"/>
        <label>1</label>
    </ligand>
</feature>
<feature type="binding site" evidence="1">
    <location>
        <position position="481"/>
    </location>
    <ligand>
        <name>Mn(2+)</name>
        <dbReference type="ChEBI" id="CHEBI:29035"/>
        <label>2</label>
    </ligand>
</feature>
<feature type="binding site" evidence="1">
    <location>
        <position position="482"/>
    </location>
    <ligand>
        <name>Mn(2+)</name>
        <dbReference type="ChEBI" id="CHEBI:29035"/>
        <label>2</label>
    </ligand>
</feature>
<feature type="binding site" evidence="1">
    <location>
        <position position="500"/>
    </location>
    <ligand>
        <name>Mn(2+)</name>
        <dbReference type="ChEBI" id="CHEBI:29035"/>
        <label>1</label>
    </ligand>
</feature>
<gene>
    <name evidence="1" type="primary">gpmI</name>
    <name type="synonym">pgm</name>
    <name type="ordered locus">Psyc_0701</name>
</gene>
<organism>
    <name type="scientific">Psychrobacter arcticus (strain DSM 17307 / VKM B-2377 / 273-4)</name>
    <dbReference type="NCBI Taxonomy" id="259536"/>
    <lineage>
        <taxon>Bacteria</taxon>
        <taxon>Pseudomonadati</taxon>
        <taxon>Pseudomonadota</taxon>
        <taxon>Gammaproteobacteria</taxon>
        <taxon>Moraxellales</taxon>
        <taxon>Moraxellaceae</taxon>
        <taxon>Psychrobacter</taxon>
    </lineage>
</organism>
<evidence type="ECO:0000255" key="1">
    <source>
        <dbReference type="HAMAP-Rule" id="MF_01038"/>
    </source>
</evidence>
<evidence type="ECO:0000256" key="2">
    <source>
        <dbReference type="SAM" id="MobiDB-lite"/>
    </source>
</evidence>
<sequence length="552" mass="60718">MTNTQQQSESIDDNQAQLSKQQNSDNNKKVPRVLMILDGFGHREDDKDNAIAAADMPNLDKIYEQYPHGLISASGEDVGLPDGQFGNSEVGHMNLGAGRVLYQDSTRISSEVASRDFYKNEALVNAVKAANTLGGNVHIMGLLSDGGVHSNQDHIEAMCHSALVHGAKNVFVHCFLDGRDTPPKSADKYINRLRDHIIKLNAHYESGRVQIASIIGRYYAMDRDNRWDRVQKAYELITEGKADRLSTRADGAVQAAYKARETDEFINPTVVIGRDEVPYTVDDNDALIFMNFRADRARELAQAFVLPDHEFSGFARNKQPKLAAFVMLTKYSDVLADNPKTSIAYYPTSLTNTLGEYLQSKGKTQLRIAETEKYAHVTFFFSGGREDEYKGETRILVPSPDVATYDLQPEMSAPEVTDKLVEAIESGQYDVLVVNYANGDMVGHTGIFDAAVQAVEALDVCVGRVAAAVHAAGGDMLITADHGNCEQMQDYESGQVHTQHTTEHVPLIYVGEKKVQVRSGGKLSDVAPTILALMDIEAPKEMTGENLLVAAE</sequence>
<protein>
    <recommendedName>
        <fullName evidence="1">2,3-bisphosphoglycerate-independent phosphoglycerate mutase</fullName>
        <shortName evidence="1">BPG-independent PGAM</shortName>
        <shortName evidence="1">Phosphoglyceromutase</shortName>
        <shortName evidence="1">iPGM</shortName>
        <ecNumber evidence="1">5.4.2.12</ecNumber>
    </recommendedName>
</protein>
<accession>Q4FTU8</accession>
<name>GPMI_PSYA2</name>
<keyword id="KW-0324">Glycolysis</keyword>
<keyword id="KW-0413">Isomerase</keyword>
<keyword id="KW-0464">Manganese</keyword>
<keyword id="KW-0479">Metal-binding</keyword>
<keyword id="KW-1185">Reference proteome</keyword>
<comment type="function">
    <text evidence="1">Catalyzes the interconversion of 2-phosphoglycerate and 3-phosphoglycerate.</text>
</comment>
<comment type="catalytic activity">
    <reaction evidence="1">
        <text>(2R)-2-phosphoglycerate = (2R)-3-phosphoglycerate</text>
        <dbReference type="Rhea" id="RHEA:15901"/>
        <dbReference type="ChEBI" id="CHEBI:58272"/>
        <dbReference type="ChEBI" id="CHEBI:58289"/>
        <dbReference type="EC" id="5.4.2.12"/>
    </reaction>
</comment>
<comment type="cofactor">
    <cofactor evidence="1">
        <name>Mn(2+)</name>
        <dbReference type="ChEBI" id="CHEBI:29035"/>
    </cofactor>
    <text evidence="1">Binds 2 manganese ions per subunit.</text>
</comment>
<comment type="pathway">
    <text evidence="1">Carbohydrate degradation; glycolysis; pyruvate from D-glyceraldehyde 3-phosphate: step 3/5.</text>
</comment>
<comment type="subunit">
    <text evidence="1">Monomer.</text>
</comment>
<comment type="similarity">
    <text evidence="1">Belongs to the BPG-independent phosphoglycerate mutase family.</text>
</comment>
<dbReference type="EC" id="5.4.2.12" evidence="1"/>
<dbReference type="EMBL" id="CP000082">
    <property type="protein sequence ID" value="AAZ18560.1"/>
    <property type="molecule type" value="Genomic_DNA"/>
</dbReference>
<dbReference type="RefSeq" id="WP_011279987.1">
    <property type="nucleotide sequence ID" value="NC_007204.1"/>
</dbReference>
<dbReference type="SMR" id="Q4FTU8"/>
<dbReference type="STRING" id="259536.Psyc_0701"/>
<dbReference type="KEGG" id="par:Psyc_0701"/>
<dbReference type="eggNOG" id="COG0696">
    <property type="taxonomic scope" value="Bacteria"/>
</dbReference>
<dbReference type="HOGENOM" id="CLU_026099_2_0_6"/>
<dbReference type="OrthoDB" id="9800863at2"/>
<dbReference type="UniPathway" id="UPA00109">
    <property type="reaction ID" value="UER00186"/>
</dbReference>
<dbReference type="Proteomes" id="UP000000546">
    <property type="component" value="Chromosome"/>
</dbReference>
<dbReference type="GO" id="GO:0005829">
    <property type="term" value="C:cytosol"/>
    <property type="evidence" value="ECO:0007669"/>
    <property type="project" value="TreeGrafter"/>
</dbReference>
<dbReference type="GO" id="GO:0030145">
    <property type="term" value="F:manganese ion binding"/>
    <property type="evidence" value="ECO:0007669"/>
    <property type="project" value="UniProtKB-UniRule"/>
</dbReference>
<dbReference type="GO" id="GO:0004619">
    <property type="term" value="F:phosphoglycerate mutase activity"/>
    <property type="evidence" value="ECO:0007669"/>
    <property type="project" value="UniProtKB-EC"/>
</dbReference>
<dbReference type="GO" id="GO:0006007">
    <property type="term" value="P:glucose catabolic process"/>
    <property type="evidence" value="ECO:0007669"/>
    <property type="project" value="InterPro"/>
</dbReference>
<dbReference type="GO" id="GO:0006096">
    <property type="term" value="P:glycolytic process"/>
    <property type="evidence" value="ECO:0007669"/>
    <property type="project" value="UniProtKB-UniRule"/>
</dbReference>
<dbReference type="CDD" id="cd16010">
    <property type="entry name" value="iPGM"/>
    <property type="match status" value="1"/>
</dbReference>
<dbReference type="FunFam" id="3.40.1450.10:FF:000002">
    <property type="entry name" value="2,3-bisphosphoglycerate-independent phosphoglycerate mutase"/>
    <property type="match status" value="1"/>
</dbReference>
<dbReference type="FunFam" id="3.40.720.10:FF:000001">
    <property type="entry name" value="2,3-bisphosphoglycerate-independent phosphoglycerate mutase"/>
    <property type="match status" value="1"/>
</dbReference>
<dbReference type="Gene3D" id="3.40.720.10">
    <property type="entry name" value="Alkaline Phosphatase, subunit A"/>
    <property type="match status" value="1"/>
</dbReference>
<dbReference type="Gene3D" id="3.40.1450.10">
    <property type="entry name" value="BPG-independent phosphoglycerate mutase, domain B"/>
    <property type="match status" value="1"/>
</dbReference>
<dbReference type="HAMAP" id="MF_01038">
    <property type="entry name" value="GpmI"/>
    <property type="match status" value="1"/>
</dbReference>
<dbReference type="InterPro" id="IPR017850">
    <property type="entry name" value="Alkaline_phosphatase_core_sf"/>
</dbReference>
<dbReference type="InterPro" id="IPR011258">
    <property type="entry name" value="BPG-indep_PGM_N"/>
</dbReference>
<dbReference type="InterPro" id="IPR006124">
    <property type="entry name" value="Metalloenzyme"/>
</dbReference>
<dbReference type="InterPro" id="IPR036646">
    <property type="entry name" value="PGAM_B_sf"/>
</dbReference>
<dbReference type="InterPro" id="IPR005995">
    <property type="entry name" value="Pgm_bpd_ind"/>
</dbReference>
<dbReference type="NCBIfam" id="TIGR01307">
    <property type="entry name" value="pgm_bpd_ind"/>
    <property type="match status" value="1"/>
</dbReference>
<dbReference type="PANTHER" id="PTHR31637">
    <property type="entry name" value="2,3-BISPHOSPHOGLYCERATE-INDEPENDENT PHOSPHOGLYCERATE MUTASE"/>
    <property type="match status" value="1"/>
</dbReference>
<dbReference type="PANTHER" id="PTHR31637:SF0">
    <property type="entry name" value="2,3-BISPHOSPHOGLYCERATE-INDEPENDENT PHOSPHOGLYCERATE MUTASE"/>
    <property type="match status" value="1"/>
</dbReference>
<dbReference type="Pfam" id="PF06415">
    <property type="entry name" value="iPGM_N"/>
    <property type="match status" value="1"/>
</dbReference>
<dbReference type="Pfam" id="PF01676">
    <property type="entry name" value="Metalloenzyme"/>
    <property type="match status" value="1"/>
</dbReference>
<dbReference type="PIRSF" id="PIRSF001492">
    <property type="entry name" value="IPGAM"/>
    <property type="match status" value="1"/>
</dbReference>
<dbReference type="SUPFAM" id="SSF64158">
    <property type="entry name" value="2,3-Bisphosphoglycerate-independent phosphoglycerate mutase, substrate-binding domain"/>
    <property type="match status" value="1"/>
</dbReference>
<dbReference type="SUPFAM" id="SSF53649">
    <property type="entry name" value="Alkaline phosphatase-like"/>
    <property type="match status" value="1"/>
</dbReference>
<proteinExistence type="inferred from homology"/>
<reference key="1">
    <citation type="journal article" date="2010" name="Appl. Environ. Microbiol.">
        <title>The genome sequence of Psychrobacter arcticus 273-4, a psychroactive Siberian permafrost bacterium, reveals mechanisms for adaptation to low-temperature growth.</title>
        <authorList>
            <person name="Ayala-del-Rio H.L."/>
            <person name="Chain P.S."/>
            <person name="Grzymski J.J."/>
            <person name="Ponder M.A."/>
            <person name="Ivanova N."/>
            <person name="Bergholz P.W."/>
            <person name="Di Bartolo G."/>
            <person name="Hauser L."/>
            <person name="Land M."/>
            <person name="Bakermans C."/>
            <person name="Rodrigues D."/>
            <person name="Klappenbach J."/>
            <person name="Zarka D."/>
            <person name="Larimer F."/>
            <person name="Richardson P."/>
            <person name="Murray A."/>
            <person name="Thomashow M."/>
            <person name="Tiedje J.M."/>
        </authorList>
    </citation>
    <scope>NUCLEOTIDE SEQUENCE [LARGE SCALE GENOMIC DNA]</scope>
    <source>
        <strain>DSM 17307 / VKM B-2377 / 273-4</strain>
    </source>
</reference>